<sequence length="502" mass="54584">MAIKAEEISALLRSQIENYESEMSVTDVGTVLQIGDGIALIHGLNDVMAGELVEFHNGVLGLAQNLEESNVGVVILGPYTGITEGDEVKRTGRIMEVPVGEELIGRVVNPLGQPIDGQGPINTTKTRPVEKKATGVMDRKSVDEPLQTGIKAIDALVPIGRGQRELIIGDRQTGKTTIAIDTILNQKDQGTICIYVAIGQKDSTVRANVEKLRQAGALDYTIVVAASASEPSPLLYIAPYSGVTMGEEFMFNGKHVLIVYDDLTKQAAAYRELSLLLRRPPGREAYPGDVFYLHSRLLERAAKLNDDLGGGSITALPIIETQAGDISAYVPTNVISITDGQIFLQSDLFFSGVRPAINAGQSVSRVGGSAQIKAMKKVAGTLRLDLASYRELESFAQFGSDLDEFTASKLERGKRTVEVLKQDQNKPLPVEHQVLIIYALTKGYLDDIPVVDITRFEDELNHWAESNATELLNEIRETGGLPDAEKFDTAINEFKKSFSKSE</sequence>
<feature type="chain" id="PRO_0000238358" description="ATP synthase subunit alpha">
    <location>
        <begin position="1"/>
        <end position="502"/>
    </location>
</feature>
<feature type="binding site" evidence="1">
    <location>
        <begin position="169"/>
        <end position="176"/>
    </location>
    <ligand>
        <name>ATP</name>
        <dbReference type="ChEBI" id="CHEBI:30616"/>
    </ligand>
</feature>
<feature type="site" description="Required for activity" evidence="1">
    <location>
        <position position="362"/>
    </location>
</feature>
<accession>Q2FF22</accession>
<protein>
    <recommendedName>
        <fullName evidence="1">ATP synthase subunit alpha</fullName>
        <ecNumber evidence="1">7.1.2.2</ecNumber>
    </recommendedName>
    <alternativeName>
        <fullName evidence="1">ATP synthase F1 sector subunit alpha</fullName>
    </alternativeName>
    <alternativeName>
        <fullName evidence="1">F-ATPase subunit alpha</fullName>
    </alternativeName>
</protein>
<reference key="1">
    <citation type="journal article" date="2006" name="Lancet">
        <title>Complete genome sequence of USA300, an epidemic clone of community-acquired meticillin-resistant Staphylococcus aureus.</title>
        <authorList>
            <person name="Diep B.A."/>
            <person name="Gill S.R."/>
            <person name="Chang R.F."/>
            <person name="Phan T.H."/>
            <person name="Chen J.H."/>
            <person name="Davidson M.G."/>
            <person name="Lin F."/>
            <person name="Lin J."/>
            <person name="Carleton H.A."/>
            <person name="Mongodin E.F."/>
            <person name="Sensabaugh G.F."/>
            <person name="Perdreau-Remington F."/>
        </authorList>
    </citation>
    <scope>NUCLEOTIDE SEQUENCE [LARGE SCALE GENOMIC DNA]</scope>
    <source>
        <strain>USA300</strain>
    </source>
</reference>
<dbReference type="EC" id="7.1.2.2" evidence="1"/>
<dbReference type="EMBL" id="CP000255">
    <property type="protein sequence ID" value="ABD21370.1"/>
    <property type="molecule type" value="Genomic_DNA"/>
</dbReference>
<dbReference type="RefSeq" id="WP_000974881.1">
    <property type="nucleotide sequence ID" value="NZ_CP027476.1"/>
</dbReference>
<dbReference type="SMR" id="Q2FF22"/>
<dbReference type="KEGG" id="saa:SAUSA300_2060"/>
<dbReference type="HOGENOM" id="CLU_010091_2_1_9"/>
<dbReference type="OMA" id="INQRDNW"/>
<dbReference type="Proteomes" id="UP000001939">
    <property type="component" value="Chromosome"/>
</dbReference>
<dbReference type="GO" id="GO:0005886">
    <property type="term" value="C:plasma membrane"/>
    <property type="evidence" value="ECO:0007669"/>
    <property type="project" value="UniProtKB-SubCell"/>
</dbReference>
<dbReference type="GO" id="GO:0045259">
    <property type="term" value="C:proton-transporting ATP synthase complex"/>
    <property type="evidence" value="ECO:0007669"/>
    <property type="project" value="UniProtKB-KW"/>
</dbReference>
<dbReference type="GO" id="GO:0043531">
    <property type="term" value="F:ADP binding"/>
    <property type="evidence" value="ECO:0007669"/>
    <property type="project" value="TreeGrafter"/>
</dbReference>
<dbReference type="GO" id="GO:0005524">
    <property type="term" value="F:ATP binding"/>
    <property type="evidence" value="ECO:0007669"/>
    <property type="project" value="UniProtKB-UniRule"/>
</dbReference>
<dbReference type="GO" id="GO:0046933">
    <property type="term" value="F:proton-transporting ATP synthase activity, rotational mechanism"/>
    <property type="evidence" value="ECO:0007669"/>
    <property type="project" value="UniProtKB-UniRule"/>
</dbReference>
<dbReference type="CDD" id="cd18113">
    <property type="entry name" value="ATP-synt_F1_alpha_C"/>
    <property type="match status" value="1"/>
</dbReference>
<dbReference type="CDD" id="cd18116">
    <property type="entry name" value="ATP-synt_F1_alpha_N"/>
    <property type="match status" value="1"/>
</dbReference>
<dbReference type="CDD" id="cd01132">
    <property type="entry name" value="F1-ATPase_alpha_CD"/>
    <property type="match status" value="1"/>
</dbReference>
<dbReference type="FunFam" id="1.20.150.20:FF:000001">
    <property type="entry name" value="ATP synthase subunit alpha"/>
    <property type="match status" value="1"/>
</dbReference>
<dbReference type="FunFam" id="2.40.30.20:FF:000001">
    <property type="entry name" value="ATP synthase subunit alpha"/>
    <property type="match status" value="1"/>
</dbReference>
<dbReference type="FunFam" id="3.40.50.300:FF:000002">
    <property type="entry name" value="ATP synthase subunit alpha"/>
    <property type="match status" value="1"/>
</dbReference>
<dbReference type="Gene3D" id="2.40.30.20">
    <property type="match status" value="1"/>
</dbReference>
<dbReference type="Gene3D" id="1.20.150.20">
    <property type="entry name" value="ATP synthase alpha/beta chain, C-terminal domain"/>
    <property type="match status" value="1"/>
</dbReference>
<dbReference type="Gene3D" id="3.40.50.300">
    <property type="entry name" value="P-loop containing nucleotide triphosphate hydrolases"/>
    <property type="match status" value="1"/>
</dbReference>
<dbReference type="HAMAP" id="MF_01346">
    <property type="entry name" value="ATP_synth_alpha_bact"/>
    <property type="match status" value="1"/>
</dbReference>
<dbReference type="InterPro" id="IPR023366">
    <property type="entry name" value="ATP_synth_asu-like_sf"/>
</dbReference>
<dbReference type="InterPro" id="IPR000793">
    <property type="entry name" value="ATP_synth_asu_C"/>
</dbReference>
<dbReference type="InterPro" id="IPR038376">
    <property type="entry name" value="ATP_synth_asu_C_sf"/>
</dbReference>
<dbReference type="InterPro" id="IPR033732">
    <property type="entry name" value="ATP_synth_F1_a_nt-bd_dom"/>
</dbReference>
<dbReference type="InterPro" id="IPR005294">
    <property type="entry name" value="ATP_synth_F1_asu"/>
</dbReference>
<dbReference type="InterPro" id="IPR020003">
    <property type="entry name" value="ATPase_a/bsu_AS"/>
</dbReference>
<dbReference type="InterPro" id="IPR004100">
    <property type="entry name" value="ATPase_F1/V1/A1_a/bsu_N"/>
</dbReference>
<dbReference type="InterPro" id="IPR036121">
    <property type="entry name" value="ATPase_F1/V1/A1_a/bsu_N_sf"/>
</dbReference>
<dbReference type="InterPro" id="IPR000194">
    <property type="entry name" value="ATPase_F1/V1/A1_a/bsu_nucl-bd"/>
</dbReference>
<dbReference type="InterPro" id="IPR027417">
    <property type="entry name" value="P-loop_NTPase"/>
</dbReference>
<dbReference type="NCBIfam" id="TIGR00962">
    <property type="entry name" value="atpA"/>
    <property type="match status" value="1"/>
</dbReference>
<dbReference type="NCBIfam" id="NF009884">
    <property type="entry name" value="PRK13343.1"/>
    <property type="match status" value="1"/>
</dbReference>
<dbReference type="PANTHER" id="PTHR48082">
    <property type="entry name" value="ATP SYNTHASE SUBUNIT ALPHA, MITOCHONDRIAL"/>
    <property type="match status" value="1"/>
</dbReference>
<dbReference type="PANTHER" id="PTHR48082:SF2">
    <property type="entry name" value="ATP SYNTHASE SUBUNIT ALPHA, MITOCHONDRIAL"/>
    <property type="match status" value="1"/>
</dbReference>
<dbReference type="Pfam" id="PF00006">
    <property type="entry name" value="ATP-synt_ab"/>
    <property type="match status" value="1"/>
</dbReference>
<dbReference type="Pfam" id="PF00306">
    <property type="entry name" value="ATP-synt_ab_C"/>
    <property type="match status" value="1"/>
</dbReference>
<dbReference type="Pfam" id="PF02874">
    <property type="entry name" value="ATP-synt_ab_N"/>
    <property type="match status" value="1"/>
</dbReference>
<dbReference type="PIRSF" id="PIRSF039088">
    <property type="entry name" value="F_ATPase_subunit_alpha"/>
    <property type="match status" value="1"/>
</dbReference>
<dbReference type="SUPFAM" id="SSF47917">
    <property type="entry name" value="C-terminal domain of alpha and beta subunits of F1 ATP synthase"/>
    <property type="match status" value="1"/>
</dbReference>
<dbReference type="SUPFAM" id="SSF50615">
    <property type="entry name" value="N-terminal domain of alpha and beta subunits of F1 ATP synthase"/>
    <property type="match status" value="1"/>
</dbReference>
<dbReference type="SUPFAM" id="SSF52540">
    <property type="entry name" value="P-loop containing nucleoside triphosphate hydrolases"/>
    <property type="match status" value="1"/>
</dbReference>
<dbReference type="PROSITE" id="PS00152">
    <property type="entry name" value="ATPASE_ALPHA_BETA"/>
    <property type="match status" value="1"/>
</dbReference>
<name>ATPA_STAA3</name>
<evidence type="ECO:0000255" key="1">
    <source>
        <dbReference type="HAMAP-Rule" id="MF_01346"/>
    </source>
</evidence>
<proteinExistence type="inferred from homology"/>
<keyword id="KW-0066">ATP synthesis</keyword>
<keyword id="KW-0067">ATP-binding</keyword>
<keyword id="KW-1003">Cell membrane</keyword>
<keyword id="KW-0139">CF(1)</keyword>
<keyword id="KW-0375">Hydrogen ion transport</keyword>
<keyword id="KW-0406">Ion transport</keyword>
<keyword id="KW-0472">Membrane</keyword>
<keyword id="KW-0547">Nucleotide-binding</keyword>
<keyword id="KW-1278">Translocase</keyword>
<keyword id="KW-0813">Transport</keyword>
<organism>
    <name type="scientific">Staphylococcus aureus (strain USA300)</name>
    <dbReference type="NCBI Taxonomy" id="367830"/>
    <lineage>
        <taxon>Bacteria</taxon>
        <taxon>Bacillati</taxon>
        <taxon>Bacillota</taxon>
        <taxon>Bacilli</taxon>
        <taxon>Bacillales</taxon>
        <taxon>Staphylococcaceae</taxon>
        <taxon>Staphylococcus</taxon>
    </lineage>
</organism>
<comment type="function">
    <text evidence="1">Produces ATP from ADP in the presence of a proton gradient across the membrane. The alpha chain is a regulatory subunit.</text>
</comment>
<comment type="catalytic activity">
    <reaction evidence="1">
        <text>ATP + H2O + 4 H(+)(in) = ADP + phosphate + 5 H(+)(out)</text>
        <dbReference type="Rhea" id="RHEA:57720"/>
        <dbReference type="ChEBI" id="CHEBI:15377"/>
        <dbReference type="ChEBI" id="CHEBI:15378"/>
        <dbReference type="ChEBI" id="CHEBI:30616"/>
        <dbReference type="ChEBI" id="CHEBI:43474"/>
        <dbReference type="ChEBI" id="CHEBI:456216"/>
        <dbReference type="EC" id="7.1.2.2"/>
    </reaction>
</comment>
<comment type="subunit">
    <text evidence="1">F-type ATPases have 2 components, CF(1) - the catalytic core - and CF(0) - the membrane proton channel. CF(1) has five subunits: alpha(3), beta(3), gamma(1), delta(1), epsilon(1). CF(0) has three main subunits: a(1), b(2) and c(9-12). The alpha and beta chains form an alternating ring which encloses part of the gamma chain. CF(1) is attached to CF(0) by a central stalk formed by the gamma and epsilon chains, while a peripheral stalk is formed by the delta and b chains.</text>
</comment>
<comment type="subcellular location">
    <subcellularLocation>
        <location evidence="1">Cell membrane</location>
        <topology evidence="1">Peripheral membrane protein</topology>
    </subcellularLocation>
</comment>
<comment type="similarity">
    <text evidence="1">Belongs to the ATPase alpha/beta chains family.</text>
</comment>
<gene>
    <name evidence="1" type="primary">atpA</name>
    <name type="ordered locus">SAUSA300_2060</name>
</gene>